<feature type="chain" id="PRO_0000257014" description="Chaperonin GroEL 2">
    <location>
        <begin position="1"/>
        <end position="537"/>
    </location>
</feature>
<feature type="binding site" evidence="1">
    <location>
        <begin position="29"/>
        <end position="32"/>
    </location>
    <ligand>
        <name>ATP</name>
        <dbReference type="ChEBI" id="CHEBI:30616"/>
    </ligand>
</feature>
<feature type="binding site" evidence="1">
    <location>
        <begin position="86"/>
        <end position="90"/>
    </location>
    <ligand>
        <name>ATP</name>
        <dbReference type="ChEBI" id="CHEBI:30616"/>
    </ligand>
</feature>
<feature type="binding site" evidence="1">
    <location>
        <position position="413"/>
    </location>
    <ligand>
        <name>ATP</name>
        <dbReference type="ChEBI" id="CHEBI:30616"/>
    </ligand>
</feature>
<feature type="binding site" evidence="1">
    <location>
        <begin position="477"/>
        <end position="479"/>
    </location>
    <ligand>
        <name>ATP</name>
        <dbReference type="ChEBI" id="CHEBI:30616"/>
    </ligand>
</feature>
<feature type="binding site" evidence="1">
    <location>
        <position position="493"/>
    </location>
    <ligand>
        <name>ATP</name>
        <dbReference type="ChEBI" id="CHEBI:30616"/>
    </ligand>
</feature>
<sequence>MPKILEFDESARRALERGVNRLADAVKVTLGPKGRNVVIDKKWGAPTITNDGVTVAREVELEDPYENLGAQLVKEVATKTNDAAGDGTTTATVLAQALVNEGLRSVAAGASPILLKRGIDAAAQAVSETLLSRAREIDERGDIAYVATNSAQDKQIGELIAEAFDKVGKDGVITVEESQTFGMDLEFTEGLQFDKGYISPYFVTDPDRQEAVLEDALILIHQGKISNLAELLPLLEKIVQTKKPLLIIAEDVEGDALGALVLNKMRGTLSVAAVKAPGFGERRKAMLQDIAILTGGQVIAEEVGLTLENAELDVLGKARRITVTKDTTTIVDGAGDQSEVNDRINQIRKEIEATDSDWDREKLQERLAKLAGGVCVLRVGAATEVELKERKHRLEDAISATRAAVEEGIIAGGGSALVHAAKTLEGDLGRTGDEATGVAIVRRALVAPARWIANNAGAEGNVVVSRIAELEPGHGYNAATGEYGDLVAQGIIDPVKVTRSAVQNAASIAGMLLTTEALVVEKPEEEENAEGGHGHSH</sequence>
<name>CH602_THEFY</name>
<comment type="function">
    <text evidence="1">Together with its co-chaperonin GroES, plays an essential role in assisting protein folding. The GroEL-GroES system forms a nano-cage that allows encapsulation of the non-native substrate proteins and provides a physical environment optimized to promote and accelerate protein folding.</text>
</comment>
<comment type="catalytic activity">
    <reaction evidence="1">
        <text>ATP + H2O + a folded polypeptide = ADP + phosphate + an unfolded polypeptide.</text>
        <dbReference type="EC" id="5.6.1.7"/>
    </reaction>
</comment>
<comment type="subunit">
    <text evidence="1">Forms a cylinder of 14 subunits composed of two heptameric rings stacked back-to-back. Interacts with the co-chaperonin GroES.</text>
</comment>
<comment type="subcellular location">
    <subcellularLocation>
        <location evidence="1">Cytoplasm</location>
    </subcellularLocation>
</comment>
<comment type="similarity">
    <text evidence="1">Belongs to the chaperonin (HSP60) family.</text>
</comment>
<dbReference type="EC" id="5.6.1.7" evidence="1"/>
<dbReference type="EMBL" id="CP000088">
    <property type="protein sequence ID" value="AAZ56631.1"/>
    <property type="molecule type" value="Genomic_DNA"/>
</dbReference>
<dbReference type="SMR" id="Q47LP1"/>
<dbReference type="STRING" id="269800.Tfu_2598"/>
<dbReference type="KEGG" id="tfu:Tfu_2598"/>
<dbReference type="eggNOG" id="COG0459">
    <property type="taxonomic scope" value="Bacteria"/>
</dbReference>
<dbReference type="HOGENOM" id="CLU_016503_3_0_11"/>
<dbReference type="OrthoDB" id="9766614at2"/>
<dbReference type="GO" id="GO:0005737">
    <property type="term" value="C:cytoplasm"/>
    <property type="evidence" value="ECO:0007669"/>
    <property type="project" value="UniProtKB-SubCell"/>
</dbReference>
<dbReference type="GO" id="GO:0005524">
    <property type="term" value="F:ATP binding"/>
    <property type="evidence" value="ECO:0007669"/>
    <property type="project" value="UniProtKB-UniRule"/>
</dbReference>
<dbReference type="GO" id="GO:0140662">
    <property type="term" value="F:ATP-dependent protein folding chaperone"/>
    <property type="evidence" value="ECO:0007669"/>
    <property type="project" value="InterPro"/>
</dbReference>
<dbReference type="GO" id="GO:0016853">
    <property type="term" value="F:isomerase activity"/>
    <property type="evidence" value="ECO:0007669"/>
    <property type="project" value="UniProtKB-KW"/>
</dbReference>
<dbReference type="GO" id="GO:0051082">
    <property type="term" value="F:unfolded protein binding"/>
    <property type="evidence" value="ECO:0007669"/>
    <property type="project" value="UniProtKB-UniRule"/>
</dbReference>
<dbReference type="GO" id="GO:0042026">
    <property type="term" value="P:protein refolding"/>
    <property type="evidence" value="ECO:0007669"/>
    <property type="project" value="UniProtKB-UniRule"/>
</dbReference>
<dbReference type="CDD" id="cd03344">
    <property type="entry name" value="GroEL"/>
    <property type="match status" value="1"/>
</dbReference>
<dbReference type="FunFam" id="3.50.7.10:FF:000001">
    <property type="entry name" value="60 kDa chaperonin"/>
    <property type="match status" value="1"/>
</dbReference>
<dbReference type="Gene3D" id="3.50.7.10">
    <property type="entry name" value="GroEL"/>
    <property type="match status" value="1"/>
</dbReference>
<dbReference type="Gene3D" id="1.10.560.10">
    <property type="entry name" value="GroEL-like equatorial domain"/>
    <property type="match status" value="1"/>
</dbReference>
<dbReference type="Gene3D" id="3.30.260.10">
    <property type="entry name" value="TCP-1-like chaperonin intermediate domain"/>
    <property type="match status" value="1"/>
</dbReference>
<dbReference type="HAMAP" id="MF_00600">
    <property type="entry name" value="CH60"/>
    <property type="match status" value="1"/>
</dbReference>
<dbReference type="InterPro" id="IPR018370">
    <property type="entry name" value="Chaperonin_Cpn60_CS"/>
</dbReference>
<dbReference type="InterPro" id="IPR001844">
    <property type="entry name" value="Cpn60/GroEL"/>
</dbReference>
<dbReference type="InterPro" id="IPR002423">
    <property type="entry name" value="Cpn60/GroEL/TCP-1"/>
</dbReference>
<dbReference type="InterPro" id="IPR027409">
    <property type="entry name" value="GroEL-like_apical_dom_sf"/>
</dbReference>
<dbReference type="InterPro" id="IPR027413">
    <property type="entry name" value="GROEL-like_equatorial_sf"/>
</dbReference>
<dbReference type="InterPro" id="IPR027410">
    <property type="entry name" value="TCP-1-like_intermed_sf"/>
</dbReference>
<dbReference type="NCBIfam" id="TIGR02348">
    <property type="entry name" value="GroEL"/>
    <property type="match status" value="1"/>
</dbReference>
<dbReference type="NCBIfam" id="NF000592">
    <property type="entry name" value="PRK00013.1"/>
    <property type="match status" value="1"/>
</dbReference>
<dbReference type="NCBIfam" id="NF009487">
    <property type="entry name" value="PRK12849.1"/>
    <property type="match status" value="1"/>
</dbReference>
<dbReference type="NCBIfam" id="NF009488">
    <property type="entry name" value="PRK12850.1"/>
    <property type="match status" value="1"/>
</dbReference>
<dbReference type="NCBIfam" id="NF009489">
    <property type="entry name" value="PRK12851.1"/>
    <property type="match status" value="1"/>
</dbReference>
<dbReference type="PANTHER" id="PTHR45633">
    <property type="entry name" value="60 KDA HEAT SHOCK PROTEIN, MITOCHONDRIAL"/>
    <property type="match status" value="1"/>
</dbReference>
<dbReference type="Pfam" id="PF00118">
    <property type="entry name" value="Cpn60_TCP1"/>
    <property type="match status" value="1"/>
</dbReference>
<dbReference type="PRINTS" id="PR00298">
    <property type="entry name" value="CHAPERONIN60"/>
</dbReference>
<dbReference type="SUPFAM" id="SSF52029">
    <property type="entry name" value="GroEL apical domain-like"/>
    <property type="match status" value="1"/>
</dbReference>
<dbReference type="SUPFAM" id="SSF48592">
    <property type="entry name" value="GroEL equatorial domain-like"/>
    <property type="match status" value="1"/>
</dbReference>
<dbReference type="SUPFAM" id="SSF54849">
    <property type="entry name" value="GroEL-intermediate domain like"/>
    <property type="match status" value="1"/>
</dbReference>
<dbReference type="PROSITE" id="PS00296">
    <property type="entry name" value="CHAPERONINS_CPN60"/>
    <property type="match status" value="1"/>
</dbReference>
<evidence type="ECO:0000255" key="1">
    <source>
        <dbReference type="HAMAP-Rule" id="MF_00600"/>
    </source>
</evidence>
<gene>
    <name evidence="1" type="primary">groEL2</name>
    <name evidence="1" type="synonym">groL2</name>
    <name type="ordered locus">Tfu_2598</name>
</gene>
<keyword id="KW-0067">ATP-binding</keyword>
<keyword id="KW-0143">Chaperone</keyword>
<keyword id="KW-0963">Cytoplasm</keyword>
<keyword id="KW-0413">Isomerase</keyword>
<keyword id="KW-0547">Nucleotide-binding</keyword>
<reference key="1">
    <citation type="journal article" date="2007" name="J. Bacteriol.">
        <title>Genome sequence and analysis of the soil cellulolytic actinomycete Thermobifida fusca YX.</title>
        <authorList>
            <person name="Lykidis A."/>
            <person name="Mavromatis K."/>
            <person name="Ivanova N."/>
            <person name="Anderson I."/>
            <person name="Land M."/>
            <person name="DiBartolo G."/>
            <person name="Martinez M."/>
            <person name="Lapidus A."/>
            <person name="Lucas S."/>
            <person name="Copeland A."/>
            <person name="Richardson P."/>
            <person name="Wilson D.B."/>
            <person name="Kyrpides N."/>
        </authorList>
    </citation>
    <scope>NUCLEOTIDE SEQUENCE [LARGE SCALE GENOMIC DNA]</scope>
    <source>
        <strain>YX</strain>
    </source>
</reference>
<accession>Q47LP1</accession>
<protein>
    <recommendedName>
        <fullName evidence="1">Chaperonin GroEL 2</fullName>
        <ecNumber evidence="1">5.6.1.7</ecNumber>
    </recommendedName>
    <alternativeName>
        <fullName evidence="1">60 kDa chaperonin 2</fullName>
    </alternativeName>
    <alternativeName>
        <fullName evidence="1">Chaperonin-60 2</fullName>
        <shortName evidence="1">Cpn60 2</shortName>
    </alternativeName>
</protein>
<proteinExistence type="inferred from homology"/>
<organism>
    <name type="scientific">Thermobifida fusca (strain YX)</name>
    <dbReference type="NCBI Taxonomy" id="269800"/>
    <lineage>
        <taxon>Bacteria</taxon>
        <taxon>Bacillati</taxon>
        <taxon>Actinomycetota</taxon>
        <taxon>Actinomycetes</taxon>
        <taxon>Streptosporangiales</taxon>
        <taxon>Nocardiopsidaceae</taxon>
        <taxon>Thermobifida</taxon>
    </lineage>
</organism>